<feature type="chain" id="PRO_1000011888" description="Diaminopimelate epimerase">
    <location>
        <begin position="1"/>
        <end position="276"/>
    </location>
</feature>
<feature type="active site" description="Proton donor" evidence="1">
    <location>
        <position position="75"/>
    </location>
</feature>
<feature type="active site" description="Proton acceptor" evidence="1">
    <location>
        <position position="219"/>
    </location>
</feature>
<feature type="binding site" evidence="1">
    <location>
        <position position="13"/>
    </location>
    <ligand>
        <name>substrate</name>
    </ligand>
</feature>
<feature type="binding site" evidence="1">
    <location>
        <position position="46"/>
    </location>
    <ligand>
        <name>substrate</name>
    </ligand>
</feature>
<feature type="binding site" evidence="1">
    <location>
        <position position="66"/>
    </location>
    <ligand>
        <name>substrate</name>
    </ligand>
</feature>
<feature type="binding site" evidence="1">
    <location>
        <begin position="76"/>
        <end position="77"/>
    </location>
    <ligand>
        <name>substrate</name>
    </ligand>
</feature>
<feature type="binding site" evidence="1">
    <location>
        <position position="159"/>
    </location>
    <ligand>
        <name>substrate</name>
    </ligand>
</feature>
<feature type="binding site" evidence="1">
    <location>
        <position position="192"/>
    </location>
    <ligand>
        <name>substrate</name>
    </ligand>
</feature>
<feature type="binding site" evidence="1">
    <location>
        <begin position="210"/>
        <end position="211"/>
    </location>
    <ligand>
        <name>substrate</name>
    </ligand>
</feature>
<feature type="binding site" evidence="1">
    <location>
        <begin position="220"/>
        <end position="221"/>
    </location>
    <ligand>
        <name>substrate</name>
    </ligand>
</feature>
<feature type="site" description="Could be important to modulate the pK values of the two catalytic cysteine residues" evidence="1">
    <location>
        <position position="161"/>
    </location>
</feature>
<feature type="site" description="Could be important to modulate the pK values of the two catalytic cysteine residues" evidence="1">
    <location>
        <position position="210"/>
    </location>
</feature>
<feature type="site" description="Important for dimerization" evidence="1">
    <location>
        <position position="270"/>
    </location>
</feature>
<evidence type="ECO:0000255" key="1">
    <source>
        <dbReference type="HAMAP-Rule" id="MF_00197"/>
    </source>
</evidence>
<proteinExistence type="inferred from homology"/>
<sequence length="276" mass="30499">MLIKFTKMHGLGNDFMVVDLISQHAHFRPEQVRRLADRNFGVGFDQLLIVEPPGRPDADFRYRIFNADGSEVEQCGNGARCFARFVKENRLTNKKNIRVETKKGIIELIVNKDGLVTVDMGAPRLAPADIPFVAETQEAIYPIEVNGVMYEISAVSMGNPHGVLVVDDVNKAPVHKLGKALENHPRFPERANIGFLQVVHRRFAKLRVFERGAGETLACGTGACAAVVAGRLRGLLDRKVEIKLPGGNLKISWEGEGHPVMMTGPAVRVFDGQVRI</sequence>
<reference key="1">
    <citation type="journal article" date="2005" name="Nucleic Acids Res.">
        <title>Genomic blueprint of Hahella chejuensis, a marine microbe producing an algicidal agent.</title>
        <authorList>
            <person name="Jeong H."/>
            <person name="Yim J.H."/>
            <person name="Lee C."/>
            <person name="Choi S.-H."/>
            <person name="Park Y.K."/>
            <person name="Yoon S.H."/>
            <person name="Hur C.-G."/>
            <person name="Kang H.-Y."/>
            <person name="Kim D."/>
            <person name="Lee H.H."/>
            <person name="Park K.H."/>
            <person name="Park S.-H."/>
            <person name="Park H.-S."/>
            <person name="Lee H.K."/>
            <person name="Oh T.K."/>
            <person name="Kim J.F."/>
        </authorList>
    </citation>
    <scope>NUCLEOTIDE SEQUENCE [LARGE SCALE GENOMIC DNA]</scope>
    <source>
        <strain>KCTC 2396</strain>
    </source>
</reference>
<accession>Q2SQ64</accession>
<name>DAPF_HAHCH</name>
<organism>
    <name type="scientific">Hahella chejuensis (strain KCTC 2396)</name>
    <dbReference type="NCBI Taxonomy" id="349521"/>
    <lineage>
        <taxon>Bacteria</taxon>
        <taxon>Pseudomonadati</taxon>
        <taxon>Pseudomonadota</taxon>
        <taxon>Gammaproteobacteria</taxon>
        <taxon>Oceanospirillales</taxon>
        <taxon>Hahellaceae</taxon>
        <taxon>Hahella</taxon>
    </lineage>
</organism>
<comment type="function">
    <text evidence="1">Catalyzes the stereoinversion of LL-2,6-diaminopimelate (L,L-DAP) to meso-diaminopimelate (meso-DAP), a precursor of L-lysine and an essential component of the bacterial peptidoglycan.</text>
</comment>
<comment type="catalytic activity">
    <reaction evidence="1">
        <text>(2S,6S)-2,6-diaminopimelate = meso-2,6-diaminopimelate</text>
        <dbReference type="Rhea" id="RHEA:15393"/>
        <dbReference type="ChEBI" id="CHEBI:57609"/>
        <dbReference type="ChEBI" id="CHEBI:57791"/>
        <dbReference type="EC" id="5.1.1.7"/>
    </reaction>
</comment>
<comment type="pathway">
    <text evidence="1">Amino-acid biosynthesis; L-lysine biosynthesis via DAP pathway; DL-2,6-diaminopimelate from LL-2,6-diaminopimelate: step 1/1.</text>
</comment>
<comment type="subunit">
    <text evidence="1">Homodimer.</text>
</comment>
<comment type="subcellular location">
    <subcellularLocation>
        <location evidence="1">Cytoplasm</location>
    </subcellularLocation>
</comment>
<comment type="similarity">
    <text evidence="1">Belongs to the diaminopimelate epimerase family.</text>
</comment>
<dbReference type="EC" id="5.1.1.7" evidence="1"/>
<dbReference type="EMBL" id="CP000155">
    <property type="protein sequence ID" value="ABC27210.1"/>
    <property type="molecule type" value="Genomic_DNA"/>
</dbReference>
<dbReference type="RefSeq" id="WP_011394287.1">
    <property type="nucleotide sequence ID" value="NC_007645.1"/>
</dbReference>
<dbReference type="SMR" id="Q2SQ64"/>
<dbReference type="STRING" id="349521.HCH_00298"/>
<dbReference type="KEGG" id="hch:HCH_00298"/>
<dbReference type="eggNOG" id="COG0253">
    <property type="taxonomic scope" value="Bacteria"/>
</dbReference>
<dbReference type="HOGENOM" id="CLU_053306_1_1_6"/>
<dbReference type="OrthoDB" id="9805408at2"/>
<dbReference type="UniPathway" id="UPA00034">
    <property type="reaction ID" value="UER00025"/>
</dbReference>
<dbReference type="Proteomes" id="UP000000238">
    <property type="component" value="Chromosome"/>
</dbReference>
<dbReference type="GO" id="GO:0005829">
    <property type="term" value="C:cytosol"/>
    <property type="evidence" value="ECO:0007669"/>
    <property type="project" value="TreeGrafter"/>
</dbReference>
<dbReference type="GO" id="GO:0008837">
    <property type="term" value="F:diaminopimelate epimerase activity"/>
    <property type="evidence" value="ECO:0007669"/>
    <property type="project" value="UniProtKB-UniRule"/>
</dbReference>
<dbReference type="GO" id="GO:0009089">
    <property type="term" value="P:lysine biosynthetic process via diaminopimelate"/>
    <property type="evidence" value="ECO:0007669"/>
    <property type="project" value="UniProtKB-UniRule"/>
</dbReference>
<dbReference type="FunFam" id="3.10.310.10:FF:000001">
    <property type="entry name" value="Diaminopimelate epimerase"/>
    <property type="match status" value="1"/>
</dbReference>
<dbReference type="FunFam" id="3.10.310.10:FF:000004">
    <property type="entry name" value="Diaminopimelate epimerase"/>
    <property type="match status" value="1"/>
</dbReference>
<dbReference type="Gene3D" id="3.10.310.10">
    <property type="entry name" value="Diaminopimelate Epimerase, Chain A, domain 1"/>
    <property type="match status" value="2"/>
</dbReference>
<dbReference type="HAMAP" id="MF_00197">
    <property type="entry name" value="DAP_epimerase"/>
    <property type="match status" value="1"/>
</dbReference>
<dbReference type="InterPro" id="IPR018510">
    <property type="entry name" value="DAP_epimerase_AS"/>
</dbReference>
<dbReference type="InterPro" id="IPR001653">
    <property type="entry name" value="DAP_epimerase_DapF"/>
</dbReference>
<dbReference type="NCBIfam" id="TIGR00652">
    <property type="entry name" value="DapF"/>
    <property type="match status" value="1"/>
</dbReference>
<dbReference type="PANTHER" id="PTHR31689:SF0">
    <property type="entry name" value="DIAMINOPIMELATE EPIMERASE"/>
    <property type="match status" value="1"/>
</dbReference>
<dbReference type="PANTHER" id="PTHR31689">
    <property type="entry name" value="DIAMINOPIMELATE EPIMERASE, CHLOROPLASTIC"/>
    <property type="match status" value="1"/>
</dbReference>
<dbReference type="Pfam" id="PF01678">
    <property type="entry name" value="DAP_epimerase"/>
    <property type="match status" value="2"/>
</dbReference>
<dbReference type="SUPFAM" id="SSF54506">
    <property type="entry name" value="Diaminopimelate epimerase-like"/>
    <property type="match status" value="1"/>
</dbReference>
<dbReference type="PROSITE" id="PS01326">
    <property type="entry name" value="DAP_EPIMERASE"/>
    <property type="match status" value="1"/>
</dbReference>
<gene>
    <name evidence="1" type="primary">dapF</name>
    <name type="ordered locus">HCH_00298</name>
</gene>
<keyword id="KW-0028">Amino-acid biosynthesis</keyword>
<keyword id="KW-0963">Cytoplasm</keyword>
<keyword id="KW-0413">Isomerase</keyword>
<keyword id="KW-0457">Lysine biosynthesis</keyword>
<keyword id="KW-1185">Reference proteome</keyword>
<protein>
    <recommendedName>
        <fullName evidence="1">Diaminopimelate epimerase</fullName>
        <shortName evidence="1">DAP epimerase</shortName>
        <ecNumber evidence="1">5.1.1.7</ecNumber>
    </recommendedName>
    <alternativeName>
        <fullName evidence="1">PLP-independent amino acid racemase</fullName>
    </alternativeName>
</protein>